<reference key="1">
    <citation type="submission" date="2007-08" db="EMBL/GenBank/DDBJ databases">
        <title>Complete sequence of Shewanella sediminis HAW-EB3.</title>
        <authorList>
            <consortium name="US DOE Joint Genome Institute"/>
            <person name="Copeland A."/>
            <person name="Lucas S."/>
            <person name="Lapidus A."/>
            <person name="Barry K."/>
            <person name="Glavina del Rio T."/>
            <person name="Dalin E."/>
            <person name="Tice H."/>
            <person name="Pitluck S."/>
            <person name="Chertkov O."/>
            <person name="Brettin T."/>
            <person name="Bruce D."/>
            <person name="Detter J.C."/>
            <person name="Han C."/>
            <person name="Schmutz J."/>
            <person name="Larimer F."/>
            <person name="Land M."/>
            <person name="Hauser L."/>
            <person name="Kyrpides N."/>
            <person name="Kim E."/>
            <person name="Zhao J.-S."/>
            <person name="Richardson P."/>
        </authorList>
    </citation>
    <scope>NUCLEOTIDE SEQUENCE [LARGE SCALE GENOMIC DNA]</scope>
    <source>
        <strain>HAW-EB3</strain>
    </source>
</reference>
<keyword id="KW-0963">Cytoplasm</keyword>
<keyword id="KW-0227">DNA damage</keyword>
<keyword id="KW-0233">DNA recombination</keyword>
<keyword id="KW-0234">DNA repair</keyword>
<keyword id="KW-0238">DNA-binding</keyword>
<keyword id="KW-1185">Reference proteome</keyword>
<proteinExistence type="inferred from homology"/>
<accession>A8FUW9</accession>
<evidence type="ECO:0000255" key="1">
    <source>
        <dbReference type="HAMAP-Rule" id="MF_00031"/>
    </source>
</evidence>
<comment type="function">
    <text evidence="1">The RuvA-RuvB-RuvC complex processes Holliday junction (HJ) DNA during genetic recombination and DNA repair, while the RuvA-RuvB complex plays an important role in the rescue of blocked DNA replication forks via replication fork reversal (RFR). RuvA specifically binds to HJ cruciform DNA, conferring on it an open structure. The RuvB hexamer acts as an ATP-dependent pump, pulling dsDNA into and through the RuvAB complex. HJ branch migration allows RuvC to scan DNA until it finds its consensus sequence, where it cleaves and resolves the cruciform DNA.</text>
</comment>
<comment type="subunit">
    <text evidence="1">Homotetramer. Forms an RuvA(8)-RuvB(12)-Holliday junction (HJ) complex. HJ DNA is sandwiched between 2 RuvA tetramers; dsDNA enters through RuvA and exits via RuvB. An RuvB hexamer assembles on each DNA strand where it exits the tetramer. Each RuvB hexamer is contacted by two RuvA subunits (via domain III) on 2 adjacent RuvB subunits; this complex drives branch migration. In the full resolvosome a probable DNA-RuvA(4)-RuvB(12)-RuvC(2) complex forms which resolves the HJ.</text>
</comment>
<comment type="subcellular location">
    <subcellularLocation>
        <location evidence="1">Cytoplasm</location>
    </subcellularLocation>
</comment>
<comment type="domain">
    <text evidence="1">Has three domains with a flexible linker between the domains II and III and assumes an 'L' shape. Domain III is highly mobile and contacts RuvB.</text>
</comment>
<comment type="similarity">
    <text evidence="1">Belongs to the RuvA family.</text>
</comment>
<name>RUVA_SHESH</name>
<gene>
    <name evidence="1" type="primary">ruvA</name>
    <name type="ordered locus">Ssed_2033</name>
</gene>
<protein>
    <recommendedName>
        <fullName evidence="1">Holliday junction branch migration complex subunit RuvA</fullName>
    </recommendedName>
</protein>
<organism>
    <name type="scientific">Shewanella sediminis (strain HAW-EB3)</name>
    <dbReference type="NCBI Taxonomy" id="425104"/>
    <lineage>
        <taxon>Bacteria</taxon>
        <taxon>Pseudomonadati</taxon>
        <taxon>Pseudomonadota</taxon>
        <taxon>Gammaproteobacteria</taxon>
        <taxon>Alteromonadales</taxon>
        <taxon>Shewanellaceae</taxon>
        <taxon>Shewanella</taxon>
    </lineage>
</organism>
<feature type="chain" id="PRO_1000074440" description="Holliday junction branch migration complex subunit RuvA">
    <location>
        <begin position="1"/>
        <end position="205"/>
    </location>
</feature>
<feature type="region of interest" description="Domain I" evidence="1">
    <location>
        <begin position="1"/>
        <end position="64"/>
    </location>
</feature>
<feature type="region of interest" description="Domain II" evidence="1">
    <location>
        <begin position="65"/>
        <end position="143"/>
    </location>
</feature>
<feature type="region of interest" description="Flexible linker" evidence="1">
    <location>
        <begin position="144"/>
        <end position="156"/>
    </location>
</feature>
<feature type="region of interest" description="Domain III" evidence="1">
    <location>
        <begin position="157"/>
        <end position="205"/>
    </location>
</feature>
<dbReference type="EMBL" id="CP000821">
    <property type="protein sequence ID" value="ABV36642.1"/>
    <property type="molecule type" value="Genomic_DNA"/>
</dbReference>
<dbReference type="RefSeq" id="WP_012142377.1">
    <property type="nucleotide sequence ID" value="NC_009831.1"/>
</dbReference>
<dbReference type="SMR" id="A8FUW9"/>
<dbReference type="STRING" id="425104.Ssed_2033"/>
<dbReference type="KEGG" id="sse:Ssed_2033"/>
<dbReference type="eggNOG" id="COG0632">
    <property type="taxonomic scope" value="Bacteria"/>
</dbReference>
<dbReference type="HOGENOM" id="CLU_087936_0_0_6"/>
<dbReference type="OrthoDB" id="5293449at2"/>
<dbReference type="Proteomes" id="UP000002015">
    <property type="component" value="Chromosome"/>
</dbReference>
<dbReference type="GO" id="GO:0005737">
    <property type="term" value="C:cytoplasm"/>
    <property type="evidence" value="ECO:0007669"/>
    <property type="project" value="UniProtKB-SubCell"/>
</dbReference>
<dbReference type="GO" id="GO:0009379">
    <property type="term" value="C:Holliday junction helicase complex"/>
    <property type="evidence" value="ECO:0007669"/>
    <property type="project" value="InterPro"/>
</dbReference>
<dbReference type="GO" id="GO:0048476">
    <property type="term" value="C:Holliday junction resolvase complex"/>
    <property type="evidence" value="ECO:0007669"/>
    <property type="project" value="UniProtKB-UniRule"/>
</dbReference>
<dbReference type="GO" id="GO:0005524">
    <property type="term" value="F:ATP binding"/>
    <property type="evidence" value="ECO:0007669"/>
    <property type="project" value="InterPro"/>
</dbReference>
<dbReference type="GO" id="GO:0000400">
    <property type="term" value="F:four-way junction DNA binding"/>
    <property type="evidence" value="ECO:0007669"/>
    <property type="project" value="UniProtKB-UniRule"/>
</dbReference>
<dbReference type="GO" id="GO:0009378">
    <property type="term" value="F:four-way junction helicase activity"/>
    <property type="evidence" value="ECO:0007669"/>
    <property type="project" value="InterPro"/>
</dbReference>
<dbReference type="GO" id="GO:0006310">
    <property type="term" value="P:DNA recombination"/>
    <property type="evidence" value="ECO:0007669"/>
    <property type="project" value="UniProtKB-UniRule"/>
</dbReference>
<dbReference type="GO" id="GO:0006281">
    <property type="term" value="P:DNA repair"/>
    <property type="evidence" value="ECO:0007669"/>
    <property type="project" value="UniProtKB-UniRule"/>
</dbReference>
<dbReference type="CDD" id="cd14332">
    <property type="entry name" value="UBA_RuvA_C"/>
    <property type="match status" value="1"/>
</dbReference>
<dbReference type="FunFam" id="2.40.50.140:FF:000083">
    <property type="entry name" value="Holliday junction ATP-dependent DNA helicase RuvA"/>
    <property type="match status" value="1"/>
</dbReference>
<dbReference type="Gene3D" id="1.10.150.20">
    <property type="entry name" value="5' to 3' exonuclease, C-terminal subdomain"/>
    <property type="match status" value="1"/>
</dbReference>
<dbReference type="Gene3D" id="1.10.8.10">
    <property type="entry name" value="DNA helicase RuvA subunit, C-terminal domain"/>
    <property type="match status" value="1"/>
</dbReference>
<dbReference type="Gene3D" id="2.40.50.140">
    <property type="entry name" value="Nucleic acid-binding proteins"/>
    <property type="match status" value="1"/>
</dbReference>
<dbReference type="HAMAP" id="MF_00031">
    <property type="entry name" value="DNA_HJ_migration_RuvA"/>
    <property type="match status" value="1"/>
</dbReference>
<dbReference type="InterPro" id="IPR013849">
    <property type="entry name" value="DNA_helicase_Holl-junc_RuvA_I"/>
</dbReference>
<dbReference type="InterPro" id="IPR003583">
    <property type="entry name" value="Hlx-hairpin-Hlx_DNA-bd_motif"/>
</dbReference>
<dbReference type="InterPro" id="IPR012340">
    <property type="entry name" value="NA-bd_OB-fold"/>
</dbReference>
<dbReference type="InterPro" id="IPR000085">
    <property type="entry name" value="RuvA"/>
</dbReference>
<dbReference type="InterPro" id="IPR010994">
    <property type="entry name" value="RuvA_2-like"/>
</dbReference>
<dbReference type="InterPro" id="IPR011114">
    <property type="entry name" value="RuvA_C"/>
</dbReference>
<dbReference type="InterPro" id="IPR036267">
    <property type="entry name" value="RuvA_C_sf"/>
</dbReference>
<dbReference type="NCBIfam" id="TIGR00084">
    <property type="entry name" value="ruvA"/>
    <property type="match status" value="1"/>
</dbReference>
<dbReference type="Pfam" id="PF14520">
    <property type="entry name" value="HHH_5"/>
    <property type="match status" value="1"/>
</dbReference>
<dbReference type="Pfam" id="PF07499">
    <property type="entry name" value="RuvA_C"/>
    <property type="match status" value="1"/>
</dbReference>
<dbReference type="Pfam" id="PF01330">
    <property type="entry name" value="RuvA_N"/>
    <property type="match status" value="1"/>
</dbReference>
<dbReference type="SMART" id="SM00278">
    <property type="entry name" value="HhH1"/>
    <property type="match status" value="2"/>
</dbReference>
<dbReference type="SUPFAM" id="SSF46929">
    <property type="entry name" value="DNA helicase RuvA subunit, C-terminal domain"/>
    <property type="match status" value="1"/>
</dbReference>
<dbReference type="SUPFAM" id="SSF50249">
    <property type="entry name" value="Nucleic acid-binding proteins"/>
    <property type="match status" value="1"/>
</dbReference>
<dbReference type="SUPFAM" id="SSF47781">
    <property type="entry name" value="RuvA domain 2-like"/>
    <property type="match status" value="1"/>
</dbReference>
<sequence>MIGRLRGLLVEKQAPEILLEVQGLGYEVQMPLTSFYELPELNQEAIVYTHFVVREDAQLLYGFITKQERALFRLLIKTNGVGPKLALTILSGMTASEFVACVERDDIATLVKLPGVGKKTAERLLVEMRDKLKSLMEASAGSEREFMLKSNYTPAPVINTAEEDAIAALLSLGYKPAQASKAVSAVYQDGMDSETLIKSSLKSML</sequence>